<proteinExistence type="evidence at protein level"/>
<organism>
    <name type="scientific">Torpedo marmorata</name>
    <name type="common">Marbled electric ray</name>
    <dbReference type="NCBI Taxonomy" id="7788"/>
    <lineage>
        <taxon>Eukaryota</taxon>
        <taxon>Metazoa</taxon>
        <taxon>Chordata</taxon>
        <taxon>Craniata</taxon>
        <taxon>Vertebrata</taxon>
        <taxon>Chondrichthyes</taxon>
        <taxon>Elasmobranchii</taxon>
        <taxon>Batoidea</taxon>
        <taxon>Torpediniformes</taxon>
        <taxon>Torpedinidae</taxon>
        <taxon>Torpedo</taxon>
    </lineage>
</organism>
<sequence length="805" mass="88888">MSHEKNEASGYPEAQSWKSQEAMLGARTEVSRWRAVKNCLYRHLVKVLGEDWIFLLLLGALMALVSWAMDFIGSRGLRFYKYLFALVEGNIGLQYLVWVCYPLALILFSSLFCQIVSPQAVGSGIPELKTIIRGAVLHEYLTLRTFVAKTVGLTVALSAGFPLGKEGPFVHIASICATLLNQLLCFISGRREEPYYLRADILTVGCALGISCCFGTPLAGVLFSIEVTCSHFGVRSYWRGFLGGAFSAFIFRVLSVWVKDTVTLTALFKTNFRGDIPFDLQEMPAFAIIGIASGFFGALFVYLNRQIIVFMRKKNFVTKILKKQRLIYPAVVTFVLATLRFPPGVGQFFGAGLMPRETINSLFDNYTWTKTIDPRGLGNSAQWFIPHLNIFIVMALYFVMHFWMAALAVTMPVPCGAFVPVFNLGAVLGRFVGELMALLFPDGLVSNGNLYHILPGEYAVIGAAAMTGAVTHAVSTAVICFELTGQISHVLPMMVAVILANMVAQGLQPSLYDSIIQIKKLPYLPELSWSSANKYNIQVGDIMVRDVTSIASTSTYGDLLHVLRQTKLKFFPFVDTPDTNTLLGSIDRTEVEGLLQRRISAYRRQPAAAAEADEEGRNGETGASFTGEAESSFAYIDQEDAEGQQREGLEAVKVQTEDPRPPSPVPAEEPTQTSGIYQKKQKGTGQVASRFEEMLTLEEIYRWEQREKNVVVNFETCRIDQSPFQLVEGTSLQKTHTLFSLLGLDRAYVTSMGKLVGVVALAEIQAAIEGSYQKGFRLPPPLASFRDVKHARNSGRTATSNSSGK</sequence>
<dbReference type="EMBL" id="X56758">
    <property type="protein sequence ID" value="CAA40078.1"/>
    <property type="molecule type" value="mRNA"/>
</dbReference>
<dbReference type="PIR" id="S13410">
    <property type="entry name" value="S13410"/>
</dbReference>
<dbReference type="PDB" id="2D4Z">
    <property type="method" value="X-ray"/>
    <property type="resolution" value="3.10 A"/>
    <property type="chains" value="A/B=525-774"/>
</dbReference>
<dbReference type="PDBsum" id="2D4Z"/>
<dbReference type="SMR" id="P21564"/>
<dbReference type="DIP" id="DIP-29086N"/>
<dbReference type="EvolutionaryTrace" id="P21564"/>
<dbReference type="GO" id="GO:0034707">
    <property type="term" value="C:chloride channel complex"/>
    <property type="evidence" value="ECO:0007669"/>
    <property type="project" value="UniProtKB-KW"/>
</dbReference>
<dbReference type="GO" id="GO:0005886">
    <property type="term" value="C:plasma membrane"/>
    <property type="evidence" value="ECO:0007669"/>
    <property type="project" value="TreeGrafter"/>
</dbReference>
<dbReference type="GO" id="GO:0005247">
    <property type="term" value="F:voltage-gated chloride channel activity"/>
    <property type="evidence" value="ECO:0007669"/>
    <property type="project" value="InterPro"/>
</dbReference>
<dbReference type="CDD" id="cd04591">
    <property type="entry name" value="CBS_pair_voltage-gated_CLC_euk_bac"/>
    <property type="match status" value="1"/>
</dbReference>
<dbReference type="CDD" id="cd03683">
    <property type="entry name" value="ClC_1_like"/>
    <property type="match status" value="1"/>
</dbReference>
<dbReference type="FunFam" id="1.10.3080.10:FF:000003">
    <property type="entry name" value="Chloride channel 2"/>
    <property type="match status" value="1"/>
</dbReference>
<dbReference type="Gene3D" id="3.10.580.10">
    <property type="entry name" value="CBS-domain"/>
    <property type="match status" value="2"/>
</dbReference>
<dbReference type="Gene3D" id="1.10.3080.10">
    <property type="entry name" value="Clc chloride channel"/>
    <property type="match status" value="1"/>
</dbReference>
<dbReference type="InterPro" id="IPR000644">
    <property type="entry name" value="CBS_dom"/>
</dbReference>
<dbReference type="InterPro" id="IPR046342">
    <property type="entry name" value="CBS_dom_sf"/>
</dbReference>
<dbReference type="InterPro" id="IPR014743">
    <property type="entry name" value="Cl-channel_core"/>
</dbReference>
<dbReference type="InterPro" id="IPR002242">
    <property type="entry name" value="Cl_channel-0"/>
</dbReference>
<dbReference type="InterPro" id="IPR050970">
    <property type="entry name" value="Cl_channel_volt-gated"/>
</dbReference>
<dbReference type="InterPro" id="IPR001807">
    <property type="entry name" value="ClC"/>
</dbReference>
<dbReference type="PANTHER" id="PTHR45720:SF4">
    <property type="entry name" value="CHLORIDE CHANNEL PROTEIN 1"/>
    <property type="match status" value="1"/>
</dbReference>
<dbReference type="PANTHER" id="PTHR45720">
    <property type="entry name" value="CHLORIDE CHANNEL PROTEIN 2"/>
    <property type="match status" value="1"/>
</dbReference>
<dbReference type="Pfam" id="PF00571">
    <property type="entry name" value="CBS"/>
    <property type="match status" value="1"/>
</dbReference>
<dbReference type="Pfam" id="PF00654">
    <property type="entry name" value="Voltage_CLC"/>
    <property type="match status" value="1"/>
</dbReference>
<dbReference type="PRINTS" id="PR00762">
    <property type="entry name" value="CLCHANNEL"/>
</dbReference>
<dbReference type="PRINTS" id="PR01111">
    <property type="entry name" value="CLCHANNEL0"/>
</dbReference>
<dbReference type="SUPFAM" id="SSF54631">
    <property type="entry name" value="CBS-domain pair"/>
    <property type="match status" value="1"/>
</dbReference>
<dbReference type="SUPFAM" id="SSF81340">
    <property type="entry name" value="Clc chloride channel"/>
    <property type="match status" value="1"/>
</dbReference>
<dbReference type="PROSITE" id="PS51371">
    <property type="entry name" value="CBS"/>
    <property type="match status" value="2"/>
</dbReference>
<accession>P21564</accession>
<name>CICH_TORMA</name>
<evidence type="ECO:0000250" key="1"/>
<evidence type="ECO:0000255" key="2"/>
<evidence type="ECO:0000255" key="3">
    <source>
        <dbReference type="PROSITE-ProRule" id="PRU00703"/>
    </source>
</evidence>
<evidence type="ECO:0000256" key="4">
    <source>
        <dbReference type="SAM" id="MobiDB-lite"/>
    </source>
</evidence>
<evidence type="ECO:0000269" key="5">
    <source>
    </source>
</evidence>
<evidence type="ECO:0000305" key="6"/>
<evidence type="ECO:0007829" key="7">
    <source>
        <dbReference type="PDB" id="2D4Z"/>
    </source>
</evidence>
<protein>
    <recommendedName>
        <fullName>Chloride channel protein</fullName>
    </recommendedName>
    <alternativeName>
        <fullName>ClC-0</fullName>
    </alternativeName>
</protein>
<reference key="1">
    <citation type="journal article" date="1990" name="Nature">
        <title>Primary structure of Torpedo marmorata chloride channel isolated by expression cloning in Xenopus oocytes.</title>
        <authorList>
            <person name="Jentsch T.J."/>
            <person name="Steinmeyer K."/>
            <person name="Schwarz G."/>
        </authorList>
    </citation>
    <scope>NUCLEOTIDE SEQUENCE [MRNA]</scope>
    <source>
        <tissue>Electric organ</tissue>
    </source>
</reference>
<reference key="2">
    <citation type="journal article" date="2006" name="Structure">
        <title>Crystal structure of the cytoplasmic domain of the chloride channel ClC-0.</title>
        <authorList>
            <person name="Meyer S."/>
            <person name="Dutzler R."/>
        </authorList>
    </citation>
    <scope>X-RAY CRYSTALLOGRAPHY (3.1 ANGSTROMS) OF 525-774</scope>
    <scope>IDENTIFICATION BY MASS SPECTROMETRY</scope>
    <scope>SUBUNIT</scope>
</reference>
<comment type="function">
    <text>Voltage-gated chloride channel. This channel is thought to ensure the high conductance of the non-innervated membrane of the electrocyte necessary for efficient current generation caused by sodium influx through the acetylcholine receptor at the innervated membrane.</text>
</comment>
<comment type="subunit">
    <text evidence="5">Homodimer. Each subunit contains a channel ('Double barreled channel').</text>
</comment>
<comment type="subcellular location">
    <subcellularLocation>
        <location>Membrane</location>
        <topology>Multi-pass membrane protein</topology>
    </subcellularLocation>
</comment>
<comment type="miscellaneous">
    <text evidence="1">The CLC channel family contains both chloride channels and proton-coupled anion transporters that exchange chloride or another anion for protons. The absence of conserved gating glutamate residues is typical for family members that function as channels (By similarity).</text>
</comment>
<comment type="similarity">
    <text evidence="6">Belongs to the chloride channel (TC 2.A.49) family. ClC-0 subfamily.</text>
</comment>
<keyword id="KW-0002">3D-structure</keyword>
<keyword id="KW-0129">CBS domain</keyword>
<keyword id="KW-0868">Chloride</keyword>
<keyword id="KW-0869">Chloride channel</keyword>
<keyword id="KW-0325">Glycoprotein</keyword>
<keyword id="KW-0407">Ion channel</keyword>
<keyword id="KW-0406">Ion transport</keyword>
<keyword id="KW-0472">Membrane</keyword>
<keyword id="KW-0677">Repeat</keyword>
<keyword id="KW-0812">Transmembrane</keyword>
<keyword id="KW-1133">Transmembrane helix</keyword>
<keyword id="KW-0813">Transport</keyword>
<keyword id="KW-0851">Voltage-gated channel</keyword>
<feature type="chain" id="PRO_0000094464" description="Chloride channel protein">
    <location>
        <begin position="1"/>
        <end position="805"/>
    </location>
</feature>
<feature type="topological domain" description="Cytoplasmic" evidence="1">
    <location>
        <begin position="1"/>
        <end position="48"/>
    </location>
</feature>
<feature type="transmembrane region" description="Helical" evidence="1">
    <location>
        <begin position="49"/>
        <end position="86"/>
    </location>
</feature>
<feature type="transmembrane region" description="Helical" evidence="1">
    <location>
        <begin position="93"/>
        <end position="116"/>
    </location>
</feature>
<feature type="intramembrane region" description="Helical" evidence="1">
    <location>
        <begin position="125"/>
        <end position="132"/>
    </location>
</feature>
<feature type="transmembrane region" description="Helical" evidence="1">
    <location>
        <begin position="141"/>
        <end position="159"/>
    </location>
</feature>
<feature type="transmembrane region" description="Helical" evidence="1">
    <location>
        <begin position="166"/>
        <end position="184"/>
    </location>
</feature>
<feature type="intramembrane region" description="Helical" evidence="1">
    <location>
        <begin position="201"/>
        <end position="213"/>
    </location>
</feature>
<feature type="intramembrane region" description="Helical" evidence="1">
    <location>
        <begin position="217"/>
        <end position="225"/>
    </location>
</feature>
<feature type="transmembrane region" description="Helical" evidence="1">
    <location>
        <begin position="237"/>
        <end position="256"/>
    </location>
</feature>
<feature type="transmembrane region" description="Helical" evidence="1">
    <location>
        <begin position="283"/>
        <end position="311"/>
    </location>
</feature>
<feature type="transmembrane region" description="Helical" evidence="1">
    <location>
        <begin position="320"/>
        <end position="339"/>
    </location>
</feature>
<feature type="transmembrane region" description="Helical" evidence="1">
    <location>
        <begin position="388"/>
        <end position="408"/>
    </location>
</feature>
<feature type="transmembrane region" description="Helical" evidence="1">
    <location>
        <begin position="416"/>
        <end position="439"/>
    </location>
</feature>
<feature type="intramembrane region" description="Helical" evidence="1">
    <location>
        <begin position="456"/>
        <end position="470"/>
    </location>
</feature>
<feature type="intramembrane region" description="Note=Loop between two helices" evidence="1">
    <location>
        <begin position="471"/>
        <end position="472"/>
    </location>
</feature>
<feature type="intramembrane region" description="Helical" evidence="1">
    <location>
        <begin position="473"/>
        <end position="484"/>
    </location>
</feature>
<feature type="intramembrane region" description="Note=Loop between two helices" evidence="1">
    <location>
        <begin position="485"/>
        <end position="489"/>
    </location>
</feature>
<feature type="transmembrane region" description="Helical" evidence="1">
    <location>
        <begin position="490"/>
        <end position="507"/>
    </location>
</feature>
<feature type="topological domain" description="Cytoplasmic" evidence="1">
    <location>
        <begin position="508"/>
        <end position="805"/>
    </location>
</feature>
<feature type="domain" description="CBS 1" evidence="3">
    <location>
        <begin position="543"/>
        <end position="601"/>
    </location>
</feature>
<feature type="domain" description="CBS 2" evidence="3">
    <location>
        <begin position="719"/>
        <end position="776"/>
    </location>
</feature>
<feature type="region of interest" description="Disordered" evidence="4">
    <location>
        <begin position="606"/>
        <end position="625"/>
    </location>
</feature>
<feature type="region of interest" description="Disordered" evidence="4">
    <location>
        <begin position="653"/>
        <end position="684"/>
    </location>
</feature>
<feature type="short sequence motif" description="Selectivity filter part_1" evidence="1">
    <location>
        <begin position="122"/>
        <end position="126"/>
    </location>
</feature>
<feature type="short sequence motif" description="Selectivity filter part_2" evidence="1">
    <location>
        <begin position="164"/>
        <end position="168"/>
    </location>
</feature>
<feature type="short sequence motif" description="Selectivity filter part_3" evidence="1">
    <location>
        <begin position="416"/>
        <end position="420"/>
    </location>
</feature>
<feature type="binding site" evidence="1">
    <location>
        <position position="123"/>
    </location>
    <ligand>
        <name>chloride</name>
        <dbReference type="ChEBI" id="CHEBI:17996"/>
    </ligand>
</feature>
<feature type="binding site" evidence="1">
    <location>
        <position position="418"/>
    </location>
    <ligand>
        <name>chloride</name>
        <dbReference type="ChEBI" id="CHEBI:17996"/>
    </ligand>
</feature>
<feature type="binding site" evidence="1">
    <location>
        <position position="512"/>
    </location>
    <ligand>
        <name>chloride</name>
        <dbReference type="ChEBI" id="CHEBI:17996"/>
    </ligand>
</feature>
<feature type="glycosylation site" description="N-linked (GlcNAc...) asparagine" evidence="2">
    <location>
        <position position="365"/>
    </location>
</feature>
<feature type="strand" evidence="7">
    <location>
        <begin position="541"/>
        <end position="546"/>
    </location>
</feature>
<feature type="helix" evidence="7">
    <location>
        <begin position="556"/>
        <end position="565"/>
    </location>
</feature>
<feature type="strand" evidence="7">
    <location>
        <begin position="569"/>
        <end position="575"/>
    </location>
</feature>
<feature type="turn" evidence="7">
    <location>
        <begin position="577"/>
        <end position="579"/>
    </location>
</feature>
<feature type="strand" evidence="7">
    <location>
        <begin position="581"/>
        <end position="587"/>
    </location>
</feature>
<feature type="helix" evidence="7">
    <location>
        <begin position="588"/>
        <end position="600"/>
    </location>
</feature>
<feature type="strand" evidence="7">
    <location>
        <begin position="603"/>
        <end position="605"/>
    </location>
</feature>
<feature type="helix" evidence="7">
    <location>
        <begin position="697"/>
        <end position="707"/>
    </location>
</feature>
<feature type="helix" evidence="7">
    <location>
        <begin position="732"/>
        <end position="742"/>
    </location>
</feature>
<feature type="strand" evidence="7">
    <location>
        <begin position="745"/>
        <end position="751"/>
    </location>
</feature>
<feature type="strand" evidence="7">
    <location>
        <begin position="754"/>
        <end position="760"/>
    </location>
</feature>
<feature type="helix" evidence="7">
    <location>
        <begin position="761"/>
        <end position="769"/>
    </location>
</feature>